<name>DEUP1_RAT</name>
<gene>
    <name evidence="5" type="primary">Deup1</name>
    <name type="synonym">Ccdc67</name>
</gene>
<comment type="function">
    <text evidence="1">Key structural component of the deuterosome, a structure that promotes de novo centriole amplification in multiciliated cells. Deuterosome-mediated centriole amplification occurs in terminally differentiated multiciliated cells and can generate more than 100 centrioles. Probably sufficient for the specification and formation of the deuterosome inner core. Interacts with CEP152 and recruits PLK4 to activate centriole biogenesis (By similarity).</text>
</comment>
<comment type="subunit">
    <text evidence="1">Interacts with CEP152; the interaction is mutually exclusive with CEP63.</text>
</comment>
<comment type="subcellular location">
    <subcellularLocation>
        <location evidence="1">Cytoplasm</location>
    </subcellularLocation>
    <text evidence="1">Localizes to the deuterosome.</text>
</comment>
<comment type="similarity">
    <text evidence="4">Belongs to the CEP63 family.</text>
</comment>
<comment type="caution">
    <text evidence="4">It is uncertain whether Met-1 or Met-22 is the initiator.</text>
</comment>
<comment type="sequence caution" evidence="4">
    <conflict type="erroneous initiation">
        <sequence resource="EMBL-CDS" id="AAH85333"/>
    </conflict>
</comment>
<reference key="1">
    <citation type="journal article" date="2004" name="Genome Res.">
        <title>The status, quality, and expansion of the NIH full-length cDNA project: the Mammalian Gene Collection (MGC).</title>
        <authorList>
            <consortium name="The MGC Project Team"/>
        </authorList>
    </citation>
    <scope>NUCLEOTIDE SEQUENCE [LARGE SCALE MRNA]</scope>
    <source>
        <tissue>Testis</tissue>
    </source>
</reference>
<reference key="2">
    <citation type="journal article" date="2012" name="Nat. Commun.">
        <title>Quantitative maps of protein phosphorylation sites across 14 different rat organs and tissues.</title>
        <authorList>
            <person name="Lundby A."/>
            <person name="Secher A."/>
            <person name="Lage K."/>
            <person name="Nordsborg N.B."/>
            <person name="Dmytriyev A."/>
            <person name="Lundby C."/>
            <person name="Olsen J.V."/>
        </authorList>
    </citation>
    <scope>PHOSPHORYLATION [LARGE SCALE ANALYSIS] AT SER-544</scope>
    <scope>IDENTIFICATION BY MASS SPECTROMETRY [LARGE SCALE ANALYSIS]</scope>
</reference>
<feature type="chain" id="PRO_0000297832" description="Deuterosome assembly protein 1">
    <location>
        <begin position="1"/>
        <end position="601"/>
    </location>
</feature>
<feature type="region of interest" description="Disordered" evidence="3">
    <location>
        <begin position="115"/>
        <end position="135"/>
    </location>
</feature>
<feature type="region of interest" description="Disordered" evidence="3">
    <location>
        <begin position="188"/>
        <end position="213"/>
    </location>
</feature>
<feature type="region of interest" description="Disordered" evidence="3">
    <location>
        <begin position="307"/>
        <end position="326"/>
    </location>
</feature>
<feature type="coiled-coil region" evidence="2">
    <location>
        <begin position="14"/>
        <end position="59"/>
    </location>
</feature>
<feature type="coiled-coil region" evidence="2">
    <location>
        <begin position="86"/>
        <end position="197"/>
    </location>
</feature>
<feature type="coiled-coil region" evidence="2">
    <location>
        <begin position="226"/>
        <end position="278"/>
    </location>
</feature>
<feature type="coiled-coil region" evidence="2">
    <location>
        <begin position="340"/>
        <end position="397"/>
    </location>
</feature>
<feature type="coiled-coil region" evidence="2">
    <location>
        <begin position="555"/>
        <end position="586"/>
    </location>
</feature>
<feature type="compositionally biased region" description="Basic and acidic residues" evidence="3">
    <location>
        <begin position="121"/>
        <end position="131"/>
    </location>
</feature>
<feature type="modified residue" description="Phosphoserine" evidence="6">
    <location>
        <position position="544"/>
    </location>
</feature>
<dbReference type="EMBL" id="BC085333">
    <property type="protein sequence ID" value="AAH85333.1"/>
    <property type="status" value="ALT_INIT"/>
    <property type="molecule type" value="mRNA"/>
</dbReference>
<dbReference type="RefSeq" id="NP_001014109.2">
    <property type="nucleotide sequence ID" value="NM_001014087.1"/>
</dbReference>
<dbReference type="RefSeq" id="XP_063121400.1">
    <property type="nucleotide sequence ID" value="XM_063265330.1"/>
</dbReference>
<dbReference type="SMR" id="Q5U3Z6"/>
<dbReference type="FunCoup" id="Q5U3Z6">
    <property type="interactions" value="180"/>
</dbReference>
<dbReference type="STRING" id="10116.ENSRNOP00000069511"/>
<dbReference type="CarbonylDB" id="Q5U3Z6"/>
<dbReference type="iPTMnet" id="Q5U3Z6"/>
<dbReference type="PhosphoSitePlus" id="Q5U3Z6"/>
<dbReference type="PaxDb" id="10116-ENSRNOP00000015063"/>
<dbReference type="GeneID" id="315438"/>
<dbReference type="KEGG" id="rno:315438"/>
<dbReference type="UCSC" id="RGD:1306632">
    <property type="organism name" value="rat"/>
</dbReference>
<dbReference type="AGR" id="RGD:1306632"/>
<dbReference type="CTD" id="159989"/>
<dbReference type="RGD" id="1306632">
    <property type="gene designation" value="Deup1"/>
</dbReference>
<dbReference type="VEuPathDB" id="HostDB:ENSRNOG00000061247"/>
<dbReference type="eggNOG" id="ENOG502QRBJ">
    <property type="taxonomic scope" value="Eukaryota"/>
</dbReference>
<dbReference type="HOGENOM" id="CLU_027471_1_0_1"/>
<dbReference type="InParanoid" id="Q5U3Z6"/>
<dbReference type="OrthoDB" id="10007333at2759"/>
<dbReference type="PhylomeDB" id="Q5U3Z6"/>
<dbReference type="TreeFam" id="TF330595"/>
<dbReference type="PRO" id="PR:Q5U3Z6"/>
<dbReference type="Proteomes" id="UP000002494">
    <property type="component" value="Chromosome 8"/>
</dbReference>
<dbReference type="Bgee" id="ENSRNOG00000061247">
    <property type="expression patterns" value="Expressed in testis and 5 other cell types or tissues"/>
</dbReference>
<dbReference type="GO" id="GO:0005814">
    <property type="term" value="C:centriole"/>
    <property type="evidence" value="ECO:0000318"/>
    <property type="project" value="GO_Central"/>
</dbReference>
<dbReference type="GO" id="GO:0005737">
    <property type="term" value="C:cytoplasm"/>
    <property type="evidence" value="ECO:0007669"/>
    <property type="project" value="UniProtKB-SubCell"/>
</dbReference>
<dbReference type="GO" id="GO:0098536">
    <property type="term" value="C:deuterosome"/>
    <property type="evidence" value="ECO:0000250"/>
    <property type="project" value="UniProtKB"/>
</dbReference>
<dbReference type="GO" id="GO:0042802">
    <property type="term" value="F:identical protein binding"/>
    <property type="evidence" value="ECO:0000266"/>
    <property type="project" value="RGD"/>
</dbReference>
<dbReference type="GO" id="GO:0030030">
    <property type="term" value="P:cell projection organization"/>
    <property type="evidence" value="ECO:0007669"/>
    <property type="project" value="UniProtKB-KW"/>
</dbReference>
<dbReference type="GO" id="GO:0007099">
    <property type="term" value="P:centriole replication"/>
    <property type="evidence" value="ECO:0000318"/>
    <property type="project" value="GO_Central"/>
</dbReference>
<dbReference type="GO" id="GO:0098535">
    <property type="term" value="P:de novo centriole assembly involved in multi-ciliated epithelial cell differentiation"/>
    <property type="evidence" value="ECO:0000250"/>
    <property type="project" value="UniProtKB"/>
</dbReference>
<dbReference type="GO" id="GO:1903251">
    <property type="term" value="P:multi-ciliated epithelial cell differentiation"/>
    <property type="evidence" value="ECO:0000250"/>
    <property type="project" value="UniProtKB"/>
</dbReference>
<dbReference type="InterPro" id="IPR031470">
    <property type="entry name" value="Cep63/Deup1_N"/>
</dbReference>
<dbReference type="PANTHER" id="PTHR18875:SF5">
    <property type="entry name" value="DEUTEROSOME ASSEMBLY PROTEIN 1"/>
    <property type="match status" value="1"/>
</dbReference>
<dbReference type="PANTHER" id="PTHR18875">
    <property type="entry name" value="SARCOMA ANTIGEN NY-SAR-24/CYTOSKELETAL PROTEIN SOJO"/>
    <property type="match status" value="1"/>
</dbReference>
<dbReference type="Pfam" id="PF17045">
    <property type="entry name" value="CEP63"/>
    <property type="match status" value="1"/>
</dbReference>
<organism>
    <name type="scientific">Rattus norvegicus</name>
    <name type="common">Rat</name>
    <dbReference type="NCBI Taxonomy" id="10116"/>
    <lineage>
        <taxon>Eukaryota</taxon>
        <taxon>Metazoa</taxon>
        <taxon>Chordata</taxon>
        <taxon>Craniata</taxon>
        <taxon>Vertebrata</taxon>
        <taxon>Euteleostomi</taxon>
        <taxon>Mammalia</taxon>
        <taxon>Eutheria</taxon>
        <taxon>Euarchontoglires</taxon>
        <taxon>Glires</taxon>
        <taxon>Rodentia</taxon>
        <taxon>Myomorpha</taxon>
        <taxon>Muroidea</taxon>
        <taxon>Muridae</taxon>
        <taxon>Murinae</taxon>
        <taxon>Rattus</taxon>
    </lineage>
</organism>
<sequence>MENQAHTTAGASPCEAELQELMEQIDIMVSNKKLDWERKMRALETRLDLRDQELANAQTCLDQKGQEVGLLRQKLDSLEKCNLVMTQNYEGQLQTLKAQFSKLTNNFEKLRLHQMKQNQSHRKEASNKDETPFELSSLNQKIEEFRAKSREWDKQEILYQTHLVSLDAQQKLLSEKCNQFQKQAQNYQTQLNGKQQRPEDSSPETPRLVCESSPGCEATQRDEFIIEKLKSAVSEIALSRNKLQDENQKLLQELKMYQRQCQAMEAGLSEVKNELQSRDDLLRIIEMERLHLHRELLKMGELQTVQDNRKRVESSYSPSTKEPERKRKELFSVVSDQPNHEKELNKMRSQLYQEEDLCSEQERMRNEISELTQELHQKEVTIATIMKKAALLERQLKIELEIKEKMLAKQQISDRRYKAVRTENTHLKGMMGDLDPARYLTVDFSNKEHSRHTSINKLEYENERLRSDLAKLHINGKAAWSNQSSYEGAGAYIYQSQLKTETGGDRISEDCEMNRSPTPLSPLPFQTKEMTSPLAGDNEVLPLSPPDISFRASLAAQHFLMEEEKRAKELEKLLNTHIDELQRHTEFTLNKYTKLKQSRHI</sequence>
<keyword id="KW-0970">Cilium biogenesis/degradation</keyword>
<keyword id="KW-0175">Coiled coil</keyword>
<keyword id="KW-0963">Cytoplasm</keyword>
<keyword id="KW-0597">Phosphoprotein</keyword>
<keyword id="KW-1185">Reference proteome</keyword>
<accession>Q5U3Z6</accession>
<protein>
    <recommendedName>
        <fullName evidence="5">Deuterosome assembly protein 1</fullName>
    </recommendedName>
    <alternativeName>
        <fullName>Coiled-coil domain-containing protein 67</fullName>
    </alternativeName>
</protein>
<proteinExistence type="evidence at protein level"/>
<evidence type="ECO:0000250" key="1"/>
<evidence type="ECO:0000255" key="2"/>
<evidence type="ECO:0000256" key="3">
    <source>
        <dbReference type="SAM" id="MobiDB-lite"/>
    </source>
</evidence>
<evidence type="ECO:0000305" key="4"/>
<evidence type="ECO:0000312" key="5">
    <source>
        <dbReference type="RGD" id="1306632"/>
    </source>
</evidence>
<evidence type="ECO:0007744" key="6">
    <source>
    </source>
</evidence>